<organism>
    <name type="scientific">Cricetulus longicaudatus</name>
    <name type="common">Long-tailed dwarf hamster</name>
    <dbReference type="NCBI Taxonomy" id="10030"/>
    <lineage>
        <taxon>Eukaryota</taxon>
        <taxon>Metazoa</taxon>
        <taxon>Chordata</taxon>
        <taxon>Craniata</taxon>
        <taxon>Vertebrata</taxon>
        <taxon>Euteleostomi</taxon>
        <taxon>Mammalia</taxon>
        <taxon>Eutheria</taxon>
        <taxon>Euarchontoglires</taxon>
        <taxon>Glires</taxon>
        <taxon>Rodentia</taxon>
        <taxon>Myomorpha</taxon>
        <taxon>Muroidea</taxon>
        <taxon>Cricetidae</taxon>
        <taxon>Cricetinae</taxon>
        <taxon>Cricetulus</taxon>
    </lineage>
</organism>
<proteinExistence type="evidence at transcript level"/>
<comment type="function">
    <text evidence="1">Type V collagen is a member of group I collagen (fibrillar forming collagen). It is a minor connective tissue component of nearly ubiquitous distribution. Type V collagen binds to DNA, heparan sulfate, thrombospondin, heparin, and insulin (By similarity).</text>
</comment>
<comment type="subunit">
    <text evidence="1">Trimers of two alpha 1(V) and one alpha 2(V) chains in most tissues and trimers of one alpha 1(V), one alpha 2(V), and one alpha 3(V) chains in placenta. Interacts with CSPG4 (By similarity).</text>
</comment>
<comment type="subcellular location">
    <subcellularLocation>
        <location evidence="3">Secreted</location>
        <location evidence="3">Extracellular space</location>
        <location evidence="3">Extracellular matrix</location>
    </subcellularLocation>
</comment>
<comment type="tissue specificity">
    <text evidence="5">Ubiquitously expressed.</text>
</comment>
<comment type="PTM">
    <text evidence="1">Hydroxylation on proline residues within the sequence motif, GXPG, is most likely to be 4-hydroxy as this fits the requirement for 4-hydroxylation in vertebrates.</text>
</comment>
<comment type="PTM">
    <text evidence="1">Sulfated on 40% of tyrosines.</text>
</comment>
<comment type="similarity">
    <text evidence="3">Belongs to the fibrillar collagen family.</text>
</comment>
<feature type="signal peptide" evidence="2">
    <location>
        <begin position="1"/>
        <end position="36"/>
    </location>
</feature>
<feature type="chain" id="PRO_0000041760" description="Collagen alpha-1(V) chain">
    <location>
        <begin position="37"/>
        <end position="1840"/>
    </location>
</feature>
<feature type="domain" description="Laminin G-like">
    <location>
        <begin position="72"/>
        <end position="244"/>
    </location>
</feature>
<feature type="domain" description="Fibrillar collagen NC1" evidence="3">
    <location>
        <begin position="1611"/>
        <end position="1839"/>
    </location>
</feature>
<feature type="region of interest" description="Nonhelical region" evidence="1">
    <location>
        <begin position="231"/>
        <end position="445"/>
    </location>
</feature>
<feature type="region of interest" description="Disordered" evidence="4">
    <location>
        <begin position="242"/>
        <end position="523"/>
    </location>
</feature>
<feature type="region of interest" description="Interrupted collagenous region" evidence="1">
    <location>
        <begin position="446"/>
        <end position="560"/>
    </location>
</feature>
<feature type="region of interest" description="Disordered" evidence="4">
    <location>
        <begin position="528"/>
        <end position="547"/>
    </location>
</feature>
<feature type="region of interest" description="Disordered" evidence="4">
    <location>
        <begin position="561"/>
        <end position="1576"/>
    </location>
</feature>
<feature type="region of interest" description="Triple-helical region" evidence="1">
    <location>
        <begin position="561"/>
        <end position="1572"/>
    </location>
</feature>
<feature type="region of interest" description="Nonhelical region" evidence="1">
    <location>
        <begin position="1573"/>
        <end position="1607"/>
    </location>
</feature>
<feature type="compositionally biased region" description="Acidic residues" evidence="4">
    <location>
        <begin position="258"/>
        <end position="268"/>
    </location>
</feature>
<feature type="compositionally biased region" description="Low complexity" evidence="4">
    <location>
        <begin position="335"/>
        <end position="352"/>
    </location>
</feature>
<feature type="compositionally biased region" description="Low complexity" evidence="4">
    <location>
        <begin position="376"/>
        <end position="386"/>
    </location>
</feature>
<feature type="compositionally biased region" description="Pro residues" evidence="4">
    <location>
        <begin position="472"/>
        <end position="487"/>
    </location>
</feature>
<feature type="compositionally biased region" description="Low complexity" evidence="4">
    <location>
        <begin position="508"/>
        <end position="523"/>
    </location>
</feature>
<feature type="compositionally biased region" description="Low complexity" evidence="4">
    <location>
        <begin position="561"/>
        <end position="572"/>
    </location>
</feature>
<feature type="compositionally biased region" description="Low complexity" evidence="4">
    <location>
        <begin position="673"/>
        <end position="688"/>
    </location>
</feature>
<feature type="compositionally biased region" description="Pro residues" evidence="4">
    <location>
        <begin position="689"/>
        <end position="698"/>
    </location>
</feature>
<feature type="compositionally biased region" description="Low complexity" evidence="4">
    <location>
        <begin position="724"/>
        <end position="743"/>
    </location>
</feature>
<feature type="compositionally biased region" description="Low complexity" evidence="4">
    <location>
        <begin position="749"/>
        <end position="758"/>
    </location>
</feature>
<feature type="compositionally biased region" description="Basic and acidic residues" evidence="4">
    <location>
        <begin position="839"/>
        <end position="848"/>
    </location>
</feature>
<feature type="compositionally biased region" description="Low complexity" evidence="4">
    <location>
        <begin position="910"/>
        <end position="919"/>
    </location>
</feature>
<feature type="compositionally biased region" description="Low complexity" evidence="4">
    <location>
        <begin position="973"/>
        <end position="992"/>
    </location>
</feature>
<feature type="compositionally biased region" description="Low complexity" evidence="4">
    <location>
        <begin position="1001"/>
        <end position="1013"/>
    </location>
</feature>
<feature type="compositionally biased region" description="Low complexity" evidence="4">
    <location>
        <begin position="1090"/>
        <end position="1106"/>
    </location>
</feature>
<feature type="compositionally biased region" description="Pro residues" evidence="4">
    <location>
        <begin position="1108"/>
        <end position="1117"/>
    </location>
</feature>
<feature type="compositionally biased region" description="Low complexity" evidence="4">
    <location>
        <begin position="1261"/>
        <end position="1270"/>
    </location>
</feature>
<feature type="compositionally biased region" description="Gly residues" evidence="4">
    <location>
        <begin position="1296"/>
        <end position="1305"/>
    </location>
</feature>
<feature type="compositionally biased region" description="Pro residues" evidence="4">
    <location>
        <begin position="1382"/>
        <end position="1400"/>
    </location>
</feature>
<feature type="compositionally biased region" description="Pro residues" evidence="4">
    <location>
        <begin position="1456"/>
        <end position="1471"/>
    </location>
</feature>
<feature type="compositionally biased region" description="Low complexity" evidence="4">
    <location>
        <begin position="1487"/>
        <end position="1496"/>
    </location>
</feature>
<feature type="compositionally biased region" description="Pro residues" evidence="4">
    <location>
        <begin position="1528"/>
        <end position="1543"/>
    </location>
</feature>
<feature type="compositionally biased region" description="Low complexity" evidence="4">
    <location>
        <begin position="1544"/>
        <end position="1556"/>
    </location>
</feature>
<feature type="modified residue" description="Sulfotyrosine" evidence="2">
    <location>
        <position position="234"/>
    </location>
</feature>
<feature type="modified residue" description="Sulfotyrosine" evidence="2">
    <location>
        <position position="236"/>
    </location>
</feature>
<feature type="modified residue" description="Sulfotyrosine" evidence="2">
    <location>
        <position position="240"/>
    </location>
</feature>
<feature type="modified residue" description="Sulfotyrosine" evidence="2">
    <location>
        <position position="262"/>
    </location>
</feature>
<feature type="modified residue" description="Sulfotyrosine" evidence="2">
    <location>
        <position position="263"/>
    </location>
</feature>
<feature type="modified residue" description="Sulfotyrosine" evidence="2">
    <location>
        <position position="271"/>
    </location>
</feature>
<feature type="modified residue" description="4-hydroxyproline" evidence="1">
    <location>
        <position position="572"/>
    </location>
</feature>
<feature type="modified residue" description="4-hydroxyproline" evidence="1">
    <location>
        <position position="578"/>
    </location>
</feature>
<feature type="modified residue" description="4-hydroxyproline" evidence="1">
    <location>
        <position position="623"/>
    </location>
</feature>
<feature type="modified residue" description="5-hydroxylysine" evidence="1">
    <location>
        <position position="629"/>
    </location>
</feature>
<feature type="modified residue" description="4-hydroxyproline" evidence="1">
    <location>
        <position position="641"/>
    </location>
</feature>
<feature type="modified residue" description="5-hydroxylysine" evidence="1">
    <location>
        <position position="644"/>
    </location>
</feature>
<feature type="modified residue" description="4-hydroxyproline" evidence="1">
    <location>
        <position position="650"/>
    </location>
</feature>
<feature type="modified residue" description="4-hydroxyproline" evidence="1">
    <location>
        <position position="656"/>
    </location>
</feature>
<feature type="modified residue" description="4-hydroxyproline" evidence="1">
    <location>
        <position position="659"/>
    </location>
</feature>
<feature type="modified residue" description="4-hydroxyproline" evidence="1">
    <location>
        <position position="677"/>
    </location>
</feature>
<feature type="modified residue" description="4-hydroxyproline" evidence="1">
    <location>
        <position position="680"/>
    </location>
</feature>
<feature type="modified residue" description="3-hydroxyproline" evidence="1">
    <location>
        <position position="682"/>
    </location>
</feature>
<feature type="modified residue" description="3-hydroxyproline" evidence="1">
    <location>
        <position position="688"/>
    </location>
</feature>
<feature type="modified residue" description="4-hydroxyproline" evidence="1">
    <location>
        <position position="692"/>
    </location>
</feature>
<feature type="modified residue" description="4-hydroxyproline" evidence="1">
    <location>
        <position position="698"/>
    </location>
</feature>
<feature type="modified residue" description="4-hydroxyproline" evidence="1">
    <location>
        <position position="707"/>
    </location>
</feature>
<feature type="modified residue" description="5-hydroxylysine" evidence="1">
    <location>
        <position position="710"/>
    </location>
</feature>
<feature type="modified residue" description="4-hydroxyproline" evidence="1">
    <location>
        <position position="719"/>
    </location>
</feature>
<feature type="modified residue" description="4-hydroxyproline" evidence="1">
    <location>
        <position position="722"/>
    </location>
</feature>
<feature type="modified residue" description="4-hydroxyproline" evidence="1">
    <location>
        <position position="728"/>
    </location>
</feature>
<feature type="modified residue" description="4-hydroxyproline" evidence="1">
    <location>
        <position position="734"/>
    </location>
</feature>
<feature type="modified residue" description="5-hydroxylysine" evidence="1">
    <location>
        <position position="746"/>
    </location>
</feature>
<feature type="modified residue" description="4-hydroxyproline" evidence="1">
    <location>
        <position position="752"/>
    </location>
</feature>
<feature type="modified residue" description="4-hydroxyproline" evidence="1">
    <location>
        <position position="758"/>
    </location>
</feature>
<feature type="modified residue" description="4-hydroxyproline" evidence="1">
    <location>
        <position position="764"/>
    </location>
</feature>
<feature type="modified residue" description="4-hydroxyproline" evidence="1">
    <location>
        <position position="767"/>
    </location>
</feature>
<feature type="modified residue" description="4-hydroxyproline" evidence="1">
    <location>
        <position position="773"/>
    </location>
</feature>
<feature type="modified residue" description="5-hydroxylysine" evidence="1">
    <location>
        <position position="776"/>
    </location>
</feature>
<feature type="modified residue" description="4-hydroxyproline" evidence="1">
    <location>
        <position position="782"/>
    </location>
</feature>
<feature type="modified residue" description="4-hydroxyproline" evidence="1">
    <location>
        <position position="791"/>
    </location>
</feature>
<feature type="modified residue" description="5-hydroxylysine" evidence="1">
    <location>
        <position position="797"/>
    </location>
</feature>
<feature type="modified residue" description="5-hydroxylysine" evidence="1">
    <location>
        <position position="806"/>
    </location>
</feature>
<feature type="modified residue" description="5-hydroxylysine" evidence="1">
    <location>
        <position position="809"/>
    </location>
</feature>
<feature type="modified residue" description="5-hydroxylysine" evidence="1">
    <location>
        <position position="812"/>
    </location>
</feature>
<feature type="modified residue" description="4-hydroxyproline" evidence="1">
    <location>
        <position position="818"/>
    </location>
</feature>
<feature type="modified residue" description="5-hydroxylysine" evidence="1">
    <location>
        <position position="821"/>
    </location>
</feature>
<feature type="modified residue" description="4-hydroxyproline" evidence="1">
    <location>
        <position position="836"/>
    </location>
</feature>
<feature type="modified residue" description="5-hydroxylysine" evidence="1">
    <location>
        <position position="848"/>
    </location>
</feature>
<feature type="modified residue" description="5-hydroxylysine" evidence="1">
    <location>
        <position position="866"/>
    </location>
</feature>
<feature type="modified residue" description="4-hydroxyproline" evidence="1">
    <location>
        <position position="872"/>
    </location>
</feature>
<feature type="modified residue" description="4-hydroxyproline" evidence="1">
    <location>
        <position position="875"/>
    </location>
</feature>
<feature type="modified residue" description="4-hydroxyproline" evidence="1">
    <location>
        <position position="878"/>
    </location>
</feature>
<feature type="modified residue" description="5-hydroxylysine" evidence="1">
    <location>
        <position position="884"/>
    </location>
</feature>
<feature type="modified residue" description="4-hydroxyproline" evidence="1">
    <location>
        <position position="890"/>
    </location>
</feature>
<feature type="modified residue" description="4-hydroxyproline" evidence="1">
    <location>
        <position position="893"/>
    </location>
</feature>
<feature type="modified residue" description="5-hydroxylysine" evidence="1">
    <location>
        <position position="899"/>
    </location>
</feature>
<feature type="modified residue" description="4-hydroxyproline" evidence="1">
    <location>
        <position position="905"/>
    </location>
</feature>
<feature type="modified residue" description="4-hydroxyproline" evidence="1">
    <location>
        <position position="908"/>
    </location>
</feature>
<feature type="modified residue" description="4-hydroxyproline" evidence="1">
    <location>
        <position position="932"/>
    </location>
</feature>
<feature type="modified residue" description="4-hydroxyproline" evidence="1">
    <location>
        <position position="947"/>
    </location>
</feature>
<feature type="modified residue" description="4-hydroxyproline" evidence="1">
    <location>
        <position position="1019"/>
    </location>
</feature>
<feature type="modified residue" description="4-hydroxyproline" evidence="1">
    <location>
        <position position="1022"/>
    </location>
</feature>
<feature type="modified residue" description="4-hydroxyproline" evidence="1">
    <location>
        <position position="1025"/>
    </location>
</feature>
<feature type="modified residue" description="4-hydroxyproline" evidence="1">
    <location>
        <position position="1031"/>
    </location>
</feature>
<feature type="modified residue" description="4-hydroxyproline" evidence="1">
    <location>
        <position position="1223"/>
    </location>
</feature>
<feature type="modified residue" description="4-hydroxyproline" evidence="1">
    <location>
        <position position="1226"/>
    </location>
</feature>
<feature type="modified residue" description="4-hydroxyproline" evidence="1">
    <location>
        <position position="1469"/>
    </location>
</feature>
<feature type="modified residue" description="4-hydroxyproline" evidence="1">
    <location>
        <position position="1472"/>
    </location>
</feature>
<feature type="modified residue" description="Sulfotyrosine" evidence="2">
    <location>
        <position position="1603"/>
    </location>
</feature>
<feature type="modified residue" description="Sulfotyrosine" evidence="2">
    <location>
        <position position="1606"/>
    </location>
</feature>
<dbReference type="EMBL" id="M76730">
    <property type="protein sequence ID" value="AAA37002.1"/>
    <property type="molecule type" value="mRNA"/>
</dbReference>
<dbReference type="SMR" id="Q60467"/>
<dbReference type="GO" id="GO:0005581">
    <property type="term" value="C:collagen trimer"/>
    <property type="evidence" value="ECO:0007669"/>
    <property type="project" value="UniProtKB-KW"/>
</dbReference>
<dbReference type="GO" id="GO:0031012">
    <property type="term" value="C:extracellular matrix"/>
    <property type="evidence" value="ECO:0007669"/>
    <property type="project" value="TreeGrafter"/>
</dbReference>
<dbReference type="GO" id="GO:0005615">
    <property type="term" value="C:extracellular space"/>
    <property type="evidence" value="ECO:0007669"/>
    <property type="project" value="TreeGrafter"/>
</dbReference>
<dbReference type="GO" id="GO:0030020">
    <property type="term" value="F:extracellular matrix structural constituent conferring tensile strength"/>
    <property type="evidence" value="ECO:0007669"/>
    <property type="project" value="TreeGrafter"/>
</dbReference>
<dbReference type="GO" id="GO:0008201">
    <property type="term" value="F:heparin binding"/>
    <property type="evidence" value="ECO:0007669"/>
    <property type="project" value="UniProtKB-KW"/>
</dbReference>
<dbReference type="GO" id="GO:0030198">
    <property type="term" value="P:extracellular matrix organization"/>
    <property type="evidence" value="ECO:0007669"/>
    <property type="project" value="TreeGrafter"/>
</dbReference>
<dbReference type="CDD" id="cd00110">
    <property type="entry name" value="LamG"/>
    <property type="match status" value="1"/>
</dbReference>
<dbReference type="FunFam" id="2.60.120.1000:FF:000002">
    <property type="entry name" value="Collagen XI alpha 1 chain"/>
    <property type="match status" value="1"/>
</dbReference>
<dbReference type="FunFam" id="2.60.120.200:FF:000016">
    <property type="entry name" value="Collagen XI alpha 1 chain"/>
    <property type="match status" value="1"/>
</dbReference>
<dbReference type="Gene3D" id="2.60.120.1000">
    <property type="match status" value="1"/>
</dbReference>
<dbReference type="Gene3D" id="2.60.120.200">
    <property type="match status" value="1"/>
</dbReference>
<dbReference type="InterPro" id="IPR008160">
    <property type="entry name" value="Collagen"/>
</dbReference>
<dbReference type="InterPro" id="IPR050149">
    <property type="entry name" value="Collagen_superfamily"/>
</dbReference>
<dbReference type="InterPro" id="IPR013320">
    <property type="entry name" value="ConA-like_dom_sf"/>
</dbReference>
<dbReference type="InterPro" id="IPR000885">
    <property type="entry name" value="Fib_collagen_C"/>
</dbReference>
<dbReference type="InterPro" id="IPR001791">
    <property type="entry name" value="Laminin_G"/>
</dbReference>
<dbReference type="InterPro" id="IPR048287">
    <property type="entry name" value="TSPN-like_N"/>
</dbReference>
<dbReference type="PANTHER" id="PTHR24023">
    <property type="entry name" value="COLLAGEN ALPHA"/>
    <property type="match status" value="1"/>
</dbReference>
<dbReference type="PANTHER" id="PTHR24023:SF1047">
    <property type="entry name" value="SCAVENGER RECEPTOR CLASS A MEMBER 3"/>
    <property type="match status" value="1"/>
</dbReference>
<dbReference type="Pfam" id="PF01410">
    <property type="entry name" value="COLFI"/>
    <property type="match status" value="1"/>
</dbReference>
<dbReference type="Pfam" id="PF01391">
    <property type="entry name" value="Collagen"/>
    <property type="match status" value="6"/>
</dbReference>
<dbReference type="SMART" id="SM00038">
    <property type="entry name" value="COLFI"/>
    <property type="match status" value="1"/>
</dbReference>
<dbReference type="SMART" id="SM00210">
    <property type="entry name" value="TSPN"/>
    <property type="match status" value="1"/>
</dbReference>
<dbReference type="SUPFAM" id="SSF49899">
    <property type="entry name" value="Concanavalin A-like lectins/glucanases"/>
    <property type="match status" value="1"/>
</dbReference>
<dbReference type="PROSITE" id="PS51461">
    <property type="entry name" value="NC1_FIB"/>
    <property type="match status" value="1"/>
</dbReference>
<reference key="1">
    <citation type="journal article" date="1991" name="J. Biol. Chem.">
        <title>The pro-alpha-1(V) collagen chain: complete primary structure, distribution of expression, and comparison with the pro-alpha-1(XI) collagen chain.</title>
        <authorList>
            <person name="Greenspan D.S."/>
            <person name="Cheng W."/>
            <person name="Hoffman G.G."/>
        </authorList>
    </citation>
    <scope>NUCLEOTIDE SEQUENCE [MRNA]</scope>
    <scope>TISSUE SPECIFICITY</scope>
    <source>
        <tissue>Lung</tissue>
    </source>
</reference>
<gene>
    <name type="primary">COL5A1</name>
</gene>
<protein>
    <recommendedName>
        <fullName>Collagen alpha-1(V) chain</fullName>
    </recommendedName>
</protein>
<accession>Q60467</accession>
<name>CO5A1_CRILO</name>
<sequence>MDVHTRWKDRLPVGPAAVPPLLLLLLLLWAPPQSRAAQPTDLLEMLDFHNLPSGVTKTTGFCATRRSSRGPDVAYRVSKDAQLSMPRKQLYPDSDFAEDFSILTTVKAKKGSQAFLVSVYNEQGIQQVGMELGRSPVFLYEDHTGKPGPEEYPLFPGINLSDGKWHRIAISVYRKNVTLILDCKKKVVKFLNRSDHPIIDVNGIIMFGSRILDDEIFEGDIQQLLFVSDHRAAYDYCEHYSPDCDTAVPDTPQSQDPNPDEYYPEGDGETYYYEYPYYEDPEDLGKEPAPTQKPVEAARETTEVPEEQTQPPPEAPTVPETSDPAGKEDDPGFGDYDYVPTDDYYTPAPYEDLGYGEGVENPDQPTNPDSGAEVPTSTIITSNTSNPAPSPGEDKDDLGGEFTEETIKNLEENYYDPYFDPDSDSNVSPSEIGPGMPANQDTIYEGIGGPRGEKGQKGEPAIIEPGMLIEGPPGPEGPAGLPGPPGTTGPTGQVGDPGERGPPGRPGLPGADGLPGPPGTMLMLPFRFGGGGDAGSKGPMVSAQESQAQAILQQARLALRGPAGPMGLTGRPGPMGPPGSGGLKGEPGDMGPQGPRGVQGPPGPTGKPGRRGRAGSDGARGMPGQTGPKGDRGFDGLAGLPGEKGHRGDPGPSGPPGLPGDDGERGDDGEVGPRGLPGEPGPRGLLGPKGPPGPPGPPGVTGMDGQPGPKGNVGPQGEPGPPGQQGNPGAQGLPGPQGAIGPPGEKGPLGKPGLPGMPGADGPPGHPGKEGPPGEKGGQGPPGPQGPIGYPGPRGVKGADGIRGLKGTKGEKGEDGFPGFKGDMGIKGDRGEIGPPGPRGEDGPEGPKGRGGPNGDPGPLGPTGEKGKLGVPGLPGYPGRQGPKGSIGFPGFPGANGEKGGRGTPGKPGPRGQRGPTGPRGERGPRGITGKPGPKGNSGGDGPAGPPGERGPNGPQGPTGFPGPKGPPGPPGKDGLPGHPGQRGETGFQGKTGPPGPPGVVGPQGPTGETGPMGERGHPGPPGPPGEQGLPGVAGKEGTKGDPGPAGLPGKDGPPGLRGFPGDRGLPGPVGALGLKGSEGPPGPPGPAGSPGERGPAGAAGPIGIPGRPGPQGPPGPAGEKGVPGEKGPQGPAGRDGLQGPVGLPGPAGPVGPPGEDGDKGEIGEPGQKGSKGDKGEQGPPGPTGPQGPIGQPGPSGADGEPGPRGQQGLFGQKGDEGSRGFPGPPGPVGLQGLPGPPGEKGETGDVGQMGPPGPPGPRGPSGAPGADGPQGPPGGIGNPGAVGEKGEPGEAGEPGLPGEGGPLGPKGERGEKGEVGPSGAAGPPGPKGPPGDDGPKGSPGPVGFPGDPGPPGEPGPAGQDGPPGDKGDDGEPGQTGSPGPTGEPGPSGPPGKRGPPGPAGPEGRQGEKGAKGEAGLEGPPGKTGPIGPQGAPGKPGPDGLRGIPGPVGEQGLPGSPGPDGPPGPMGPPGLPGLKGDSGPKGEKGHPGLIGLIGPPGEQGEKGDRGLPGPQGSSGPKGEQGITGPSGPLGPPGPPGLPGPPGPKGAKGSSGPTGPKGEAGHPGLPGPPGPPGEVIQPLPIQASRTRRNIDASQLLDDGAGESYLDYADGMEEIFGSLNSLKLEIEQMKRPLGTQQNPARTCKDLQLCHPDFPDGEYWVDPNQGCSRDSFKVYCNFTAGGSTCVFPDKKSEGARITSWPKENPGSWFSEFKRGKLLSYVDAEGNPVGVVQMTFLRLLSASAHQNITYNCYQSVAWQDAATGSYDKAIRFLGSNDEEMSYDNNPYIRALVDGCATKKGYQKTVLEIDTPKVEQVPIVDIMFNDFGEASQKFGFEVGPACFLG</sequence>
<keyword id="KW-0176">Collagen</keyword>
<keyword id="KW-0272">Extracellular matrix</keyword>
<keyword id="KW-0358">Heparin-binding</keyword>
<keyword id="KW-0379">Hydroxylation</keyword>
<keyword id="KW-0677">Repeat</keyword>
<keyword id="KW-0964">Secreted</keyword>
<keyword id="KW-0732">Signal</keyword>
<keyword id="KW-0765">Sulfation</keyword>
<evidence type="ECO:0000250" key="1"/>
<evidence type="ECO:0000255" key="2"/>
<evidence type="ECO:0000255" key="3">
    <source>
        <dbReference type="PROSITE-ProRule" id="PRU00793"/>
    </source>
</evidence>
<evidence type="ECO:0000256" key="4">
    <source>
        <dbReference type="SAM" id="MobiDB-lite"/>
    </source>
</evidence>
<evidence type="ECO:0000269" key="5">
    <source>
    </source>
</evidence>